<dbReference type="EC" id="3.5.1.-"/>
<dbReference type="EMBL" id="AP003924">
    <property type="protein sequence ID" value="BAB85405.1"/>
    <property type="molecule type" value="Genomic_DNA"/>
</dbReference>
<dbReference type="EMBL" id="AP008207">
    <property type="protein sequence ID" value="BAF05261.1"/>
    <property type="molecule type" value="Genomic_DNA"/>
</dbReference>
<dbReference type="EMBL" id="AP014957">
    <property type="protein sequence ID" value="BAS72716.1"/>
    <property type="molecule type" value="Genomic_DNA"/>
</dbReference>
<dbReference type="EMBL" id="CM000138">
    <property type="protein sequence ID" value="EAZ12344.1"/>
    <property type="molecule type" value="Genomic_DNA"/>
</dbReference>
<dbReference type="EMBL" id="AK105974">
    <property type="protein sequence ID" value="BAG97475.1"/>
    <property type="molecule type" value="mRNA"/>
</dbReference>
<dbReference type="RefSeq" id="XP_015621783.1">
    <property type="nucleotide sequence ID" value="XM_015766297.1"/>
</dbReference>
<dbReference type="SMR" id="Q8S9S4"/>
<dbReference type="FunCoup" id="Q8S9S4">
    <property type="interactions" value="964"/>
</dbReference>
<dbReference type="STRING" id="39947.Q8S9S4"/>
<dbReference type="MEROPS" id="M20.014"/>
<dbReference type="PaxDb" id="39947-Q8S9S4"/>
<dbReference type="EnsemblPlants" id="Os01t0560000-01">
    <property type="protein sequence ID" value="Os01t0560000-01"/>
    <property type="gene ID" value="Os01g0560000"/>
</dbReference>
<dbReference type="Gramene" id="Os01t0560000-01">
    <property type="protein sequence ID" value="Os01t0560000-01"/>
    <property type="gene ID" value="Os01g0560000"/>
</dbReference>
<dbReference type="KEGG" id="dosa:Os01g0560000"/>
<dbReference type="eggNOG" id="ENOG502QQEM">
    <property type="taxonomic scope" value="Eukaryota"/>
</dbReference>
<dbReference type="HOGENOM" id="CLU_023257_0_0_1"/>
<dbReference type="InParanoid" id="Q8S9S4"/>
<dbReference type="OMA" id="VNKGMMH"/>
<dbReference type="OrthoDB" id="6119954at2759"/>
<dbReference type="PlantReactome" id="R-OSA-1119580">
    <property type="pathway name" value="IAA biosynthesis II"/>
</dbReference>
<dbReference type="Proteomes" id="UP000000763">
    <property type="component" value="Chromosome 1"/>
</dbReference>
<dbReference type="Proteomes" id="UP000007752">
    <property type="component" value="Chromosome 1"/>
</dbReference>
<dbReference type="Proteomes" id="UP000059680">
    <property type="component" value="Chromosome 1"/>
</dbReference>
<dbReference type="ExpressionAtlas" id="Q8S9S4">
    <property type="expression patterns" value="baseline and differential"/>
</dbReference>
<dbReference type="GO" id="GO:0005788">
    <property type="term" value="C:endoplasmic reticulum lumen"/>
    <property type="evidence" value="ECO:0007669"/>
    <property type="project" value="UniProtKB-SubCell"/>
</dbReference>
<dbReference type="GO" id="GO:0010179">
    <property type="term" value="F:IAA-Ala conjugate hydrolase activity"/>
    <property type="evidence" value="ECO:0000318"/>
    <property type="project" value="GO_Central"/>
</dbReference>
<dbReference type="GO" id="GO:0009850">
    <property type="term" value="P:auxin metabolic process"/>
    <property type="evidence" value="ECO:0000318"/>
    <property type="project" value="GO_Central"/>
</dbReference>
<dbReference type="CDD" id="cd08017">
    <property type="entry name" value="M20_IAA_Hyd"/>
    <property type="match status" value="1"/>
</dbReference>
<dbReference type="FunFam" id="3.30.70.360:FF:000001">
    <property type="entry name" value="N-acetyldiaminopimelate deacetylase"/>
    <property type="match status" value="1"/>
</dbReference>
<dbReference type="Gene3D" id="3.30.70.360">
    <property type="match status" value="1"/>
</dbReference>
<dbReference type="Gene3D" id="3.40.630.10">
    <property type="entry name" value="Zn peptidases"/>
    <property type="match status" value="1"/>
</dbReference>
<dbReference type="InterPro" id="IPR017439">
    <property type="entry name" value="Amidohydrolase"/>
</dbReference>
<dbReference type="InterPro" id="IPR036264">
    <property type="entry name" value="Bact_exopeptidase_dim_dom"/>
</dbReference>
<dbReference type="InterPro" id="IPR044757">
    <property type="entry name" value="ILR1-like_Hyd"/>
</dbReference>
<dbReference type="InterPro" id="IPR002933">
    <property type="entry name" value="Peptidase_M20"/>
</dbReference>
<dbReference type="InterPro" id="IPR011650">
    <property type="entry name" value="Peptidase_M20_dimer"/>
</dbReference>
<dbReference type="NCBIfam" id="TIGR01891">
    <property type="entry name" value="amidohydrolases"/>
    <property type="match status" value="1"/>
</dbReference>
<dbReference type="PANTHER" id="PTHR11014:SF119">
    <property type="entry name" value="IAA-AMINO ACID HYDROLASE ILR1-LIKE 1"/>
    <property type="match status" value="1"/>
</dbReference>
<dbReference type="PANTHER" id="PTHR11014">
    <property type="entry name" value="PEPTIDASE M20 FAMILY MEMBER"/>
    <property type="match status" value="1"/>
</dbReference>
<dbReference type="Pfam" id="PF07687">
    <property type="entry name" value="M20_dimer"/>
    <property type="match status" value="1"/>
</dbReference>
<dbReference type="Pfam" id="PF01546">
    <property type="entry name" value="Peptidase_M20"/>
    <property type="match status" value="1"/>
</dbReference>
<dbReference type="PIRSF" id="PIRSF005962">
    <property type="entry name" value="Pept_M20D_amidohydro"/>
    <property type="match status" value="1"/>
</dbReference>
<dbReference type="SUPFAM" id="SSF55031">
    <property type="entry name" value="Bacterial exopeptidase dimerisation domain"/>
    <property type="match status" value="1"/>
</dbReference>
<dbReference type="SUPFAM" id="SSF53187">
    <property type="entry name" value="Zn-dependent exopeptidases"/>
    <property type="match status" value="1"/>
</dbReference>
<dbReference type="PROSITE" id="PS00014">
    <property type="entry name" value="ER_TARGET"/>
    <property type="match status" value="1"/>
</dbReference>
<name>ILL1_ORYSJ</name>
<organism>
    <name type="scientific">Oryza sativa subsp. japonica</name>
    <name type="common">Rice</name>
    <dbReference type="NCBI Taxonomy" id="39947"/>
    <lineage>
        <taxon>Eukaryota</taxon>
        <taxon>Viridiplantae</taxon>
        <taxon>Streptophyta</taxon>
        <taxon>Embryophyta</taxon>
        <taxon>Tracheophyta</taxon>
        <taxon>Spermatophyta</taxon>
        <taxon>Magnoliopsida</taxon>
        <taxon>Liliopsida</taxon>
        <taxon>Poales</taxon>
        <taxon>Poaceae</taxon>
        <taxon>BOP clade</taxon>
        <taxon>Oryzoideae</taxon>
        <taxon>Oryzeae</taxon>
        <taxon>Oryzinae</taxon>
        <taxon>Oryza</taxon>
        <taxon>Oryza sativa</taxon>
    </lineage>
</organism>
<protein>
    <recommendedName>
        <fullName>IAA-amino acid hydrolase ILR1-like 1</fullName>
        <ecNumber>3.5.1.-</ecNumber>
    </recommendedName>
</protein>
<gene>
    <name type="primary">ILL1</name>
    <name type="synonym">IAR</name>
    <name type="ordered locus">Os01g0560000</name>
    <name type="ordered locus">LOC_Os01g37960</name>
    <name type="ORF">B1064G04.44</name>
    <name type="ORF">OsJ_002169</name>
</gene>
<keyword id="KW-0256">Endoplasmic reticulum</keyword>
<keyword id="KW-0378">Hydrolase</keyword>
<keyword id="KW-1185">Reference proteome</keyword>
<keyword id="KW-0732">Signal</keyword>
<evidence type="ECO:0000250" key="1"/>
<evidence type="ECO:0000255" key="2"/>
<evidence type="ECO:0000255" key="3">
    <source>
        <dbReference type="PROSITE-ProRule" id="PRU10138"/>
    </source>
</evidence>
<evidence type="ECO:0000305" key="4"/>
<comment type="function">
    <text evidence="1">Hydrolyzes certain amino acid conjugates of the plant growth regulator indole-3-acetic acid (IAA).</text>
</comment>
<comment type="subcellular location">
    <subcellularLocation>
        <location evidence="3">Endoplasmic reticulum lumen</location>
    </subcellularLocation>
</comment>
<comment type="similarity">
    <text evidence="4">Belongs to the peptidase M20 family.</text>
</comment>
<feature type="signal peptide" evidence="2">
    <location>
        <begin position="1"/>
        <end position="27"/>
    </location>
</feature>
<feature type="chain" id="PRO_0000351636" description="IAA-amino acid hydrolase ILR1-like 1">
    <location>
        <begin position="28"/>
        <end position="442"/>
    </location>
</feature>
<feature type="short sequence motif" description="Prevents secretion from ER" evidence="3">
    <location>
        <begin position="439"/>
        <end position="442"/>
    </location>
</feature>
<reference key="1">
    <citation type="journal article" date="2002" name="Nature">
        <title>The genome sequence and structure of rice chromosome 1.</title>
        <authorList>
            <person name="Sasaki T."/>
            <person name="Matsumoto T."/>
            <person name="Yamamoto K."/>
            <person name="Sakata K."/>
            <person name="Baba T."/>
            <person name="Katayose Y."/>
            <person name="Wu J."/>
            <person name="Niimura Y."/>
            <person name="Cheng Z."/>
            <person name="Nagamura Y."/>
            <person name="Antonio B.A."/>
            <person name="Kanamori H."/>
            <person name="Hosokawa S."/>
            <person name="Masukawa M."/>
            <person name="Arikawa K."/>
            <person name="Chiden Y."/>
            <person name="Hayashi M."/>
            <person name="Okamoto M."/>
            <person name="Ando T."/>
            <person name="Aoki H."/>
            <person name="Arita K."/>
            <person name="Hamada M."/>
            <person name="Harada C."/>
            <person name="Hijishita S."/>
            <person name="Honda M."/>
            <person name="Ichikawa Y."/>
            <person name="Idonuma A."/>
            <person name="Iijima M."/>
            <person name="Ikeda M."/>
            <person name="Ikeno M."/>
            <person name="Ito S."/>
            <person name="Ito T."/>
            <person name="Ito Y."/>
            <person name="Ito Y."/>
            <person name="Iwabuchi A."/>
            <person name="Kamiya K."/>
            <person name="Karasawa W."/>
            <person name="Katagiri S."/>
            <person name="Kikuta A."/>
            <person name="Kobayashi N."/>
            <person name="Kono I."/>
            <person name="Machita K."/>
            <person name="Maehara T."/>
            <person name="Mizuno H."/>
            <person name="Mizubayashi T."/>
            <person name="Mukai Y."/>
            <person name="Nagasaki H."/>
            <person name="Nakashima M."/>
            <person name="Nakama Y."/>
            <person name="Nakamichi Y."/>
            <person name="Nakamura M."/>
            <person name="Namiki N."/>
            <person name="Negishi M."/>
            <person name="Ohta I."/>
            <person name="Ono N."/>
            <person name="Saji S."/>
            <person name="Sakai K."/>
            <person name="Shibata M."/>
            <person name="Shimokawa T."/>
            <person name="Shomura A."/>
            <person name="Song J."/>
            <person name="Takazaki Y."/>
            <person name="Terasawa K."/>
            <person name="Tsuji K."/>
            <person name="Waki K."/>
            <person name="Yamagata H."/>
            <person name="Yamane H."/>
            <person name="Yoshiki S."/>
            <person name="Yoshihara R."/>
            <person name="Yukawa K."/>
            <person name="Zhong H."/>
            <person name="Iwama H."/>
            <person name="Endo T."/>
            <person name="Ito H."/>
            <person name="Hahn J.H."/>
            <person name="Kim H.-I."/>
            <person name="Eun M.-Y."/>
            <person name="Yano M."/>
            <person name="Jiang J."/>
            <person name="Gojobori T."/>
        </authorList>
    </citation>
    <scope>NUCLEOTIDE SEQUENCE [LARGE SCALE GENOMIC DNA]</scope>
    <source>
        <strain>cv. Nipponbare</strain>
    </source>
</reference>
<reference key="2">
    <citation type="journal article" date="2005" name="Nature">
        <title>The map-based sequence of the rice genome.</title>
        <authorList>
            <consortium name="International rice genome sequencing project (IRGSP)"/>
        </authorList>
    </citation>
    <scope>NUCLEOTIDE SEQUENCE [LARGE SCALE GENOMIC DNA]</scope>
    <source>
        <strain>cv. Nipponbare</strain>
    </source>
</reference>
<reference key="3">
    <citation type="journal article" date="2008" name="Nucleic Acids Res.">
        <title>The rice annotation project database (RAP-DB): 2008 update.</title>
        <authorList>
            <consortium name="The rice annotation project (RAP)"/>
        </authorList>
    </citation>
    <scope>GENOME REANNOTATION</scope>
    <source>
        <strain>cv. Nipponbare</strain>
    </source>
</reference>
<reference key="4">
    <citation type="journal article" date="2013" name="Rice">
        <title>Improvement of the Oryza sativa Nipponbare reference genome using next generation sequence and optical map data.</title>
        <authorList>
            <person name="Kawahara Y."/>
            <person name="de la Bastide M."/>
            <person name="Hamilton J.P."/>
            <person name="Kanamori H."/>
            <person name="McCombie W.R."/>
            <person name="Ouyang S."/>
            <person name="Schwartz D.C."/>
            <person name="Tanaka T."/>
            <person name="Wu J."/>
            <person name="Zhou S."/>
            <person name="Childs K.L."/>
            <person name="Davidson R.M."/>
            <person name="Lin H."/>
            <person name="Quesada-Ocampo L."/>
            <person name="Vaillancourt B."/>
            <person name="Sakai H."/>
            <person name="Lee S.S."/>
            <person name="Kim J."/>
            <person name="Numa H."/>
            <person name="Itoh T."/>
            <person name="Buell C.R."/>
            <person name="Matsumoto T."/>
        </authorList>
    </citation>
    <scope>GENOME REANNOTATION</scope>
    <source>
        <strain>cv. Nipponbare</strain>
    </source>
</reference>
<reference key="5">
    <citation type="journal article" date="2005" name="PLoS Biol.">
        <title>The genomes of Oryza sativa: a history of duplications.</title>
        <authorList>
            <person name="Yu J."/>
            <person name="Wang J."/>
            <person name="Lin W."/>
            <person name="Li S."/>
            <person name="Li H."/>
            <person name="Zhou J."/>
            <person name="Ni P."/>
            <person name="Dong W."/>
            <person name="Hu S."/>
            <person name="Zeng C."/>
            <person name="Zhang J."/>
            <person name="Zhang Y."/>
            <person name="Li R."/>
            <person name="Xu Z."/>
            <person name="Li S."/>
            <person name="Li X."/>
            <person name="Zheng H."/>
            <person name="Cong L."/>
            <person name="Lin L."/>
            <person name="Yin J."/>
            <person name="Geng J."/>
            <person name="Li G."/>
            <person name="Shi J."/>
            <person name="Liu J."/>
            <person name="Lv H."/>
            <person name="Li J."/>
            <person name="Wang J."/>
            <person name="Deng Y."/>
            <person name="Ran L."/>
            <person name="Shi X."/>
            <person name="Wang X."/>
            <person name="Wu Q."/>
            <person name="Li C."/>
            <person name="Ren X."/>
            <person name="Wang J."/>
            <person name="Wang X."/>
            <person name="Li D."/>
            <person name="Liu D."/>
            <person name="Zhang X."/>
            <person name="Ji Z."/>
            <person name="Zhao W."/>
            <person name="Sun Y."/>
            <person name="Zhang Z."/>
            <person name="Bao J."/>
            <person name="Han Y."/>
            <person name="Dong L."/>
            <person name="Ji J."/>
            <person name="Chen P."/>
            <person name="Wu S."/>
            <person name="Liu J."/>
            <person name="Xiao Y."/>
            <person name="Bu D."/>
            <person name="Tan J."/>
            <person name="Yang L."/>
            <person name="Ye C."/>
            <person name="Zhang J."/>
            <person name="Xu J."/>
            <person name="Zhou Y."/>
            <person name="Yu Y."/>
            <person name="Zhang B."/>
            <person name="Zhuang S."/>
            <person name="Wei H."/>
            <person name="Liu B."/>
            <person name="Lei M."/>
            <person name="Yu H."/>
            <person name="Li Y."/>
            <person name="Xu H."/>
            <person name="Wei S."/>
            <person name="He X."/>
            <person name="Fang L."/>
            <person name="Zhang Z."/>
            <person name="Zhang Y."/>
            <person name="Huang X."/>
            <person name="Su Z."/>
            <person name="Tong W."/>
            <person name="Li J."/>
            <person name="Tong Z."/>
            <person name="Li S."/>
            <person name="Ye J."/>
            <person name="Wang L."/>
            <person name="Fang L."/>
            <person name="Lei T."/>
            <person name="Chen C.-S."/>
            <person name="Chen H.-C."/>
            <person name="Xu Z."/>
            <person name="Li H."/>
            <person name="Huang H."/>
            <person name="Zhang F."/>
            <person name="Xu H."/>
            <person name="Li N."/>
            <person name="Zhao C."/>
            <person name="Li S."/>
            <person name="Dong L."/>
            <person name="Huang Y."/>
            <person name="Li L."/>
            <person name="Xi Y."/>
            <person name="Qi Q."/>
            <person name="Li W."/>
            <person name="Zhang B."/>
            <person name="Hu W."/>
            <person name="Zhang Y."/>
            <person name="Tian X."/>
            <person name="Jiao Y."/>
            <person name="Liang X."/>
            <person name="Jin J."/>
            <person name="Gao L."/>
            <person name="Zheng W."/>
            <person name="Hao B."/>
            <person name="Liu S.-M."/>
            <person name="Wang W."/>
            <person name="Yuan L."/>
            <person name="Cao M."/>
            <person name="McDermott J."/>
            <person name="Samudrala R."/>
            <person name="Wang J."/>
            <person name="Wong G.K.-S."/>
            <person name="Yang H."/>
        </authorList>
    </citation>
    <scope>NUCLEOTIDE SEQUENCE [LARGE SCALE GENOMIC DNA]</scope>
    <source>
        <strain>cv. Nipponbare</strain>
    </source>
</reference>
<reference key="6">
    <citation type="journal article" date="2003" name="Science">
        <title>Collection, mapping, and annotation of over 28,000 cDNA clones from japonica rice.</title>
        <authorList>
            <consortium name="The rice full-length cDNA consortium"/>
        </authorList>
    </citation>
    <scope>NUCLEOTIDE SEQUENCE [LARGE SCALE MRNA]</scope>
    <source>
        <strain>cv. Nipponbare</strain>
    </source>
</reference>
<proteinExistence type="evidence at transcript level"/>
<sequence length="442" mass="47135">MAAASSSRVLLAAVAVLAAALAGCGAGAALDDPAGLLRRAKEAEFAGWMVGLRRRIHENPELGYEEFATSELVRRELDALGIPYRHPFAVTGVVATVGTGGPPFVALRADMDALPMQESVEWEHKSKVPGKMHGCGHDAHVAMLLGSARILQEHRDELKGTVVLVFQPAEEGGGGAKKMIDDGAVENIEAIFGVHVADVVPIGVVASRPGPVMAGSGFFEAVISGKGGHAALPHHTIDPILAASNVIVSLQQLVSREADPLDSQVVTVGKFQGGGAFNVIPDSVTIGGTFRAFLKESFNQLKQRIEEVIVSQASVQRCNAVVDFLDKDRPFFPPTINSAGLHDFFVKVASEMVGPKNVRDKQPLMGAEDFAFYADAIPATYYYFLGMYNETRGPQAPHHSPYFTINEDALPYGAALQASLAARYLLEHQPPTTGKAKAHDEL</sequence>
<accession>Q8S9S4</accession>
<accession>B7EYM8</accession>